<accession>Q5FHJ9</accession>
<evidence type="ECO:0000255" key="1">
    <source>
        <dbReference type="HAMAP-Rule" id="MF_00664"/>
    </source>
</evidence>
<gene>
    <name evidence="1" type="primary">psd</name>
    <name type="ordered locus">ERGA_CDS_03170</name>
</gene>
<sequence>MLCNLIHNIHKEGYIIIMISFLLSCIGFAISCSLGIIFLVASLLCIYFFRDPIRIVPEGDHLIISPADGIILNIEQVNSPIDNSTQVLCISIFLNVLNVHVNRIPVSGTIKATEYIPGRFISASLNKSSELNERQRIVIESNVSHHTIIVDQIAGLIARRIVCNAYEGQNVNSGERFGIIRFGSRVNIYLPLNIHISAFKGQTVIGGETILAYLEDYPHKQLTAKFI</sequence>
<comment type="function">
    <text evidence="1">Catalyzes the formation of phosphatidylethanolamine (PtdEtn) from phosphatidylserine (PtdSer).</text>
</comment>
<comment type="catalytic activity">
    <reaction evidence="1">
        <text>a 1,2-diacyl-sn-glycero-3-phospho-L-serine + H(+) = a 1,2-diacyl-sn-glycero-3-phosphoethanolamine + CO2</text>
        <dbReference type="Rhea" id="RHEA:20828"/>
        <dbReference type="ChEBI" id="CHEBI:15378"/>
        <dbReference type="ChEBI" id="CHEBI:16526"/>
        <dbReference type="ChEBI" id="CHEBI:57262"/>
        <dbReference type="ChEBI" id="CHEBI:64612"/>
        <dbReference type="EC" id="4.1.1.65"/>
    </reaction>
</comment>
<comment type="cofactor">
    <cofactor evidence="1">
        <name>pyruvate</name>
        <dbReference type="ChEBI" id="CHEBI:15361"/>
    </cofactor>
    <text evidence="1">Binds 1 pyruvoyl group covalently per subunit.</text>
</comment>
<comment type="pathway">
    <text evidence="1">Phospholipid metabolism; phosphatidylethanolamine biosynthesis; phosphatidylethanolamine from CDP-diacylglycerol: step 2/2.</text>
</comment>
<comment type="subunit">
    <text evidence="1">Heterodimer of a large membrane-associated beta subunit and a small pyruvoyl-containing alpha subunit.</text>
</comment>
<comment type="subcellular location">
    <subcellularLocation>
        <location evidence="1">Cell membrane</location>
        <topology evidence="1">Peripheral membrane protein</topology>
    </subcellularLocation>
</comment>
<comment type="PTM">
    <text evidence="1">Is synthesized initially as an inactive proenzyme. Formation of the active enzyme involves a self-maturation process in which the active site pyruvoyl group is generated from an internal serine residue via an autocatalytic post-translational modification. Two non-identical subunits are generated from the proenzyme in this reaction, and the pyruvate is formed at the N-terminus of the alpha chain, which is derived from the carboxyl end of the proenzyme. The post-translation cleavage follows an unusual pathway, termed non-hydrolytic serinolysis, in which the side chain hydroxyl group of the serine supplies its oxygen atom to form the C-terminus of the beta chain, while the remainder of the serine residue undergoes an oxidative deamination to produce ammonia and the pyruvoyl prosthetic group on the alpha chain.</text>
</comment>
<comment type="similarity">
    <text evidence="1">Belongs to the phosphatidylserine decarboxylase family. PSD-A subfamily.</text>
</comment>
<name>PSD_EHRRG</name>
<feature type="chain" id="PRO_0000262213" description="Phosphatidylserine decarboxylase beta chain" evidence="1">
    <location>
        <begin position="1"/>
        <end position="183"/>
    </location>
</feature>
<feature type="chain" id="PRO_0000262214" description="Phosphatidylserine decarboxylase alpha chain" evidence="1">
    <location>
        <begin position="184"/>
        <end position="227"/>
    </location>
</feature>
<feature type="active site" description="Schiff-base intermediate with substrate; via pyruvic acid" evidence="1">
    <location>
        <position position="184"/>
    </location>
</feature>
<feature type="site" description="Cleavage (non-hydrolytic); by autocatalysis" evidence="1">
    <location>
        <begin position="183"/>
        <end position="184"/>
    </location>
</feature>
<feature type="modified residue" description="Pyruvic acid (Ser); by autocatalysis" evidence="1">
    <location>
        <position position="184"/>
    </location>
</feature>
<dbReference type="EC" id="4.1.1.65" evidence="1"/>
<dbReference type="EMBL" id="CR925677">
    <property type="protein sequence ID" value="CAI27769.1"/>
    <property type="molecule type" value="Genomic_DNA"/>
</dbReference>
<dbReference type="RefSeq" id="WP_011255471.1">
    <property type="nucleotide sequence ID" value="NC_006831.1"/>
</dbReference>
<dbReference type="KEGG" id="erg:ERGA_CDS_03170"/>
<dbReference type="HOGENOM" id="CLU_072492_0_0_5"/>
<dbReference type="OrthoDB" id="9790893at2"/>
<dbReference type="UniPathway" id="UPA00558">
    <property type="reaction ID" value="UER00616"/>
</dbReference>
<dbReference type="Proteomes" id="UP000000533">
    <property type="component" value="Chromosome"/>
</dbReference>
<dbReference type="GO" id="GO:0005886">
    <property type="term" value="C:plasma membrane"/>
    <property type="evidence" value="ECO:0007669"/>
    <property type="project" value="UniProtKB-SubCell"/>
</dbReference>
<dbReference type="GO" id="GO:0004609">
    <property type="term" value="F:phosphatidylserine decarboxylase activity"/>
    <property type="evidence" value="ECO:0007669"/>
    <property type="project" value="UniProtKB-UniRule"/>
</dbReference>
<dbReference type="GO" id="GO:0006646">
    <property type="term" value="P:phosphatidylethanolamine biosynthetic process"/>
    <property type="evidence" value="ECO:0007669"/>
    <property type="project" value="UniProtKB-UniRule"/>
</dbReference>
<dbReference type="HAMAP" id="MF_00664">
    <property type="entry name" value="PS_decarb_PSD_A"/>
    <property type="match status" value="1"/>
</dbReference>
<dbReference type="InterPro" id="IPR003817">
    <property type="entry name" value="PS_Dcarbxylase"/>
</dbReference>
<dbReference type="InterPro" id="IPR033175">
    <property type="entry name" value="PSD-A"/>
</dbReference>
<dbReference type="NCBIfam" id="NF003678">
    <property type="entry name" value="PRK05305.1-2"/>
    <property type="match status" value="1"/>
</dbReference>
<dbReference type="NCBIfam" id="NF003684">
    <property type="entry name" value="PRK05305.2-4"/>
    <property type="match status" value="1"/>
</dbReference>
<dbReference type="NCBIfam" id="NF003685">
    <property type="entry name" value="PRK05305.2-5"/>
    <property type="match status" value="1"/>
</dbReference>
<dbReference type="PANTHER" id="PTHR35809">
    <property type="entry name" value="ARCHAETIDYLSERINE DECARBOXYLASE PROENZYME-RELATED"/>
    <property type="match status" value="1"/>
</dbReference>
<dbReference type="PANTHER" id="PTHR35809:SF1">
    <property type="entry name" value="ARCHAETIDYLSERINE DECARBOXYLASE PROENZYME-RELATED"/>
    <property type="match status" value="1"/>
</dbReference>
<dbReference type="Pfam" id="PF02666">
    <property type="entry name" value="PS_Dcarbxylase"/>
    <property type="match status" value="1"/>
</dbReference>
<keyword id="KW-1003">Cell membrane</keyword>
<keyword id="KW-0210">Decarboxylase</keyword>
<keyword id="KW-0444">Lipid biosynthesis</keyword>
<keyword id="KW-0443">Lipid metabolism</keyword>
<keyword id="KW-0456">Lyase</keyword>
<keyword id="KW-0472">Membrane</keyword>
<keyword id="KW-0594">Phospholipid biosynthesis</keyword>
<keyword id="KW-1208">Phospholipid metabolism</keyword>
<keyword id="KW-0670">Pyruvate</keyword>
<keyword id="KW-0865">Zymogen</keyword>
<organism>
    <name type="scientific">Ehrlichia ruminantium (strain Gardel)</name>
    <dbReference type="NCBI Taxonomy" id="302409"/>
    <lineage>
        <taxon>Bacteria</taxon>
        <taxon>Pseudomonadati</taxon>
        <taxon>Pseudomonadota</taxon>
        <taxon>Alphaproteobacteria</taxon>
        <taxon>Rickettsiales</taxon>
        <taxon>Anaplasmataceae</taxon>
        <taxon>Ehrlichia</taxon>
    </lineage>
</organism>
<reference key="1">
    <citation type="journal article" date="2006" name="J. Bacteriol.">
        <title>Comparative genomic analysis of three strains of Ehrlichia ruminantium reveals an active process of genome size plasticity.</title>
        <authorList>
            <person name="Frutos R."/>
            <person name="Viari A."/>
            <person name="Ferraz C."/>
            <person name="Morgat A."/>
            <person name="Eychenie S."/>
            <person name="Kandassamy Y."/>
            <person name="Chantal I."/>
            <person name="Bensaid A."/>
            <person name="Coissac E."/>
            <person name="Vachiery N."/>
            <person name="Demaille J."/>
            <person name="Martinez D."/>
        </authorList>
    </citation>
    <scope>NUCLEOTIDE SEQUENCE [LARGE SCALE GENOMIC DNA]</scope>
    <source>
        <strain>Gardel</strain>
    </source>
</reference>
<protein>
    <recommendedName>
        <fullName evidence="1">Phosphatidylserine decarboxylase proenzyme</fullName>
        <ecNumber evidence="1">4.1.1.65</ecNumber>
    </recommendedName>
    <component>
        <recommendedName>
            <fullName evidence="1">Phosphatidylserine decarboxylase alpha chain</fullName>
        </recommendedName>
    </component>
    <component>
        <recommendedName>
            <fullName evidence="1">Phosphatidylserine decarboxylase beta chain</fullName>
        </recommendedName>
    </component>
</protein>
<proteinExistence type="inferred from homology"/>